<feature type="chain" id="PRO_1000086343" description="Large ribosomal subunit protein uL2">
    <location>
        <begin position="1"/>
        <end position="274"/>
    </location>
</feature>
<feature type="region of interest" description="Disordered" evidence="2">
    <location>
        <begin position="28"/>
        <end position="55"/>
    </location>
</feature>
<feature type="region of interest" description="Disordered" evidence="2">
    <location>
        <begin position="224"/>
        <end position="274"/>
    </location>
</feature>
<name>RL2_PSEPG</name>
<dbReference type="EMBL" id="CP000926">
    <property type="protein sequence ID" value="ABY96398.1"/>
    <property type="molecule type" value="Genomic_DNA"/>
</dbReference>
<dbReference type="RefSeq" id="WP_008089816.1">
    <property type="nucleotide sequence ID" value="NC_010322.1"/>
</dbReference>
<dbReference type="SMR" id="B0KK70"/>
<dbReference type="GeneID" id="45522022"/>
<dbReference type="KEGG" id="ppg:PputGB1_0487"/>
<dbReference type="eggNOG" id="COG0090">
    <property type="taxonomic scope" value="Bacteria"/>
</dbReference>
<dbReference type="HOGENOM" id="CLU_036235_2_1_6"/>
<dbReference type="Proteomes" id="UP000002157">
    <property type="component" value="Chromosome"/>
</dbReference>
<dbReference type="GO" id="GO:0015934">
    <property type="term" value="C:large ribosomal subunit"/>
    <property type="evidence" value="ECO:0007669"/>
    <property type="project" value="InterPro"/>
</dbReference>
<dbReference type="GO" id="GO:0019843">
    <property type="term" value="F:rRNA binding"/>
    <property type="evidence" value="ECO:0007669"/>
    <property type="project" value="UniProtKB-UniRule"/>
</dbReference>
<dbReference type="GO" id="GO:0003735">
    <property type="term" value="F:structural constituent of ribosome"/>
    <property type="evidence" value="ECO:0007669"/>
    <property type="project" value="InterPro"/>
</dbReference>
<dbReference type="GO" id="GO:0016740">
    <property type="term" value="F:transferase activity"/>
    <property type="evidence" value="ECO:0007669"/>
    <property type="project" value="InterPro"/>
</dbReference>
<dbReference type="GO" id="GO:0002181">
    <property type="term" value="P:cytoplasmic translation"/>
    <property type="evidence" value="ECO:0007669"/>
    <property type="project" value="TreeGrafter"/>
</dbReference>
<dbReference type="FunFam" id="2.30.30.30:FF:000001">
    <property type="entry name" value="50S ribosomal protein L2"/>
    <property type="match status" value="1"/>
</dbReference>
<dbReference type="FunFam" id="2.40.50.140:FF:000003">
    <property type="entry name" value="50S ribosomal protein L2"/>
    <property type="match status" value="1"/>
</dbReference>
<dbReference type="FunFam" id="4.10.950.10:FF:000001">
    <property type="entry name" value="50S ribosomal protein L2"/>
    <property type="match status" value="1"/>
</dbReference>
<dbReference type="Gene3D" id="2.30.30.30">
    <property type="match status" value="1"/>
</dbReference>
<dbReference type="Gene3D" id="2.40.50.140">
    <property type="entry name" value="Nucleic acid-binding proteins"/>
    <property type="match status" value="1"/>
</dbReference>
<dbReference type="Gene3D" id="4.10.950.10">
    <property type="entry name" value="Ribosomal protein L2, domain 3"/>
    <property type="match status" value="1"/>
</dbReference>
<dbReference type="HAMAP" id="MF_01320_B">
    <property type="entry name" value="Ribosomal_uL2_B"/>
    <property type="match status" value="1"/>
</dbReference>
<dbReference type="InterPro" id="IPR012340">
    <property type="entry name" value="NA-bd_OB-fold"/>
</dbReference>
<dbReference type="InterPro" id="IPR014722">
    <property type="entry name" value="Rib_uL2_dom2"/>
</dbReference>
<dbReference type="InterPro" id="IPR002171">
    <property type="entry name" value="Ribosomal_uL2"/>
</dbReference>
<dbReference type="InterPro" id="IPR005880">
    <property type="entry name" value="Ribosomal_uL2_bac/org-type"/>
</dbReference>
<dbReference type="InterPro" id="IPR022669">
    <property type="entry name" value="Ribosomal_uL2_C"/>
</dbReference>
<dbReference type="InterPro" id="IPR022671">
    <property type="entry name" value="Ribosomal_uL2_CS"/>
</dbReference>
<dbReference type="InterPro" id="IPR014726">
    <property type="entry name" value="Ribosomal_uL2_dom3"/>
</dbReference>
<dbReference type="InterPro" id="IPR022666">
    <property type="entry name" value="Ribosomal_uL2_RNA-bd_dom"/>
</dbReference>
<dbReference type="InterPro" id="IPR008991">
    <property type="entry name" value="Translation_prot_SH3-like_sf"/>
</dbReference>
<dbReference type="NCBIfam" id="TIGR01171">
    <property type="entry name" value="rplB_bact"/>
    <property type="match status" value="1"/>
</dbReference>
<dbReference type="PANTHER" id="PTHR13691:SF5">
    <property type="entry name" value="LARGE RIBOSOMAL SUBUNIT PROTEIN UL2M"/>
    <property type="match status" value="1"/>
</dbReference>
<dbReference type="PANTHER" id="PTHR13691">
    <property type="entry name" value="RIBOSOMAL PROTEIN L2"/>
    <property type="match status" value="1"/>
</dbReference>
<dbReference type="Pfam" id="PF00181">
    <property type="entry name" value="Ribosomal_L2"/>
    <property type="match status" value="1"/>
</dbReference>
<dbReference type="Pfam" id="PF03947">
    <property type="entry name" value="Ribosomal_L2_C"/>
    <property type="match status" value="1"/>
</dbReference>
<dbReference type="PIRSF" id="PIRSF002158">
    <property type="entry name" value="Ribosomal_L2"/>
    <property type="match status" value="1"/>
</dbReference>
<dbReference type="SMART" id="SM01383">
    <property type="entry name" value="Ribosomal_L2"/>
    <property type="match status" value="1"/>
</dbReference>
<dbReference type="SMART" id="SM01382">
    <property type="entry name" value="Ribosomal_L2_C"/>
    <property type="match status" value="1"/>
</dbReference>
<dbReference type="SUPFAM" id="SSF50249">
    <property type="entry name" value="Nucleic acid-binding proteins"/>
    <property type="match status" value="1"/>
</dbReference>
<dbReference type="SUPFAM" id="SSF50104">
    <property type="entry name" value="Translation proteins SH3-like domain"/>
    <property type="match status" value="1"/>
</dbReference>
<dbReference type="PROSITE" id="PS00467">
    <property type="entry name" value="RIBOSOMAL_L2"/>
    <property type="match status" value="1"/>
</dbReference>
<protein>
    <recommendedName>
        <fullName evidence="1">Large ribosomal subunit protein uL2</fullName>
    </recommendedName>
    <alternativeName>
        <fullName evidence="3">50S ribosomal protein L2</fullName>
    </alternativeName>
</protein>
<gene>
    <name evidence="1" type="primary">rplB</name>
    <name type="ordered locus">PputGB1_0487</name>
</gene>
<proteinExistence type="inferred from homology"/>
<evidence type="ECO:0000255" key="1">
    <source>
        <dbReference type="HAMAP-Rule" id="MF_01320"/>
    </source>
</evidence>
<evidence type="ECO:0000256" key="2">
    <source>
        <dbReference type="SAM" id="MobiDB-lite"/>
    </source>
</evidence>
<evidence type="ECO:0000305" key="3"/>
<keyword id="KW-0687">Ribonucleoprotein</keyword>
<keyword id="KW-0689">Ribosomal protein</keyword>
<keyword id="KW-0694">RNA-binding</keyword>
<keyword id="KW-0699">rRNA-binding</keyword>
<accession>B0KK70</accession>
<comment type="function">
    <text evidence="1">One of the primary rRNA binding proteins. Required for association of the 30S and 50S subunits to form the 70S ribosome, for tRNA binding and peptide bond formation. It has been suggested to have peptidyltransferase activity; this is somewhat controversial. Makes several contacts with the 16S rRNA in the 70S ribosome.</text>
</comment>
<comment type="subunit">
    <text evidence="1">Part of the 50S ribosomal subunit. Forms a bridge to the 30S subunit in the 70S ribosome.</text>
</comment>
<comment type="similarity">
    <text evidence="1">Belongs to the universal ribosomal protein uL2 family.</text>
</comment>
<sequence length="274" mass="29641">MAIVKCKPTSPGRRFVVKVVNKELHKGAPHAPLLEKKSKSGGRNNNGRITTRHVGGGHKQHYRLVDFRRNDKDGIPATVERIEYDPNRTAHIALLCYADGERRYIIAPKGVSAGDQLIAGALAPIKAGNSLQLRNIPVGSTIHGVELKPGKGAQIARSAGASAQLIARDGVYVTLRLRSGEMRKVLAECRATLGEVSNSEHSLRSLGKAGAKRWRGVRPTVRGVAMNPVDHPHGGGEGRTSGGRHPVSPWGFPTKGAKTRGNKRTDNMIVRRRK</sequence>
<reference key="1">
    <citation type="submission" date="2008-01" db="EMBL/GenBank/DDBJ databases">
        <title>Complete sequence of Pseudomonas putida GB-1.</title>
        <authorList>
            <consortium name="US DOE Joint Genome Institute"/>
            <person name="Copeland A."/>
            <person name="Lucas S."/>
            <person name="Lapidus A."/>
            <person name="Barry K."/>
            <person name="Glavina del Rio T."/>
            <person name="Dalin E."/>
            <person name="Tice H."/>
            <person name="Pitluck S."/>
            <person name="Bruce D."/>
            <person name="Goodwin L."/>
            <person name="Chertkov O."/>
            <person name="Brettin T."/>
            <person name="Detter J.C."/>
            <person name="Han C."/>
            <person name="Kuske C.R."/>
            <person name="Schmutz J."/>
            <person name="Larimer F."/>
            <person name="Land M."/>
            <person name="Hauser L."/>
            <person name="Kyrpides N."/>
            <person name="Kim E."/>
            <person name="McCarthy J.K."/>
            <person name="Richardson P."/>
        </authorList>
    </citation>
    <scope>NUCLEOTIDE SEQUENCE [LARGE SCALE GENOMIC DNA]</scope>
    <source>
        <strain>GB-1</strain>
    </source>
</reference>
<organism>
    <name type="scientific">Pseudomonas putida (strain GB-1)</name>
    <dbReference type="NCBI Taxonomy" id="76869"/>
    <lineage>
        <taxon>Bacteria</taxon>
        <taxon>Pseudomonadati</taxon>
        <taxon>Pseudomonadota</taxon>
        <taxon>Gammaproteobacteria</taxon>
        <taxon>Pseudomonadales</taxon>
        <taxon>Pseudomonadaceae</taxon>
        <taxon>Pseudomonas</taxon>
    </lineage>
</organism>